<proteinExistence type="inferred from homology"/>
<reference key="1">
    <citation type="submission" date="2007-02" db="EMBL/GenBank/DDBJ databases">
        <title>Complete sequence of chromosome of Yersinia pestis Pestoides F.</title>
        <authorList>
            <consortium name="US DOE Joint Genome Institute"/>
            <person name="Copeland A."/>
            <person name="Lucas S."/>
            <person name="Lapidus A."/>
            <person name="Barry K."/>
            <person name="Detter J.C."/>
            <person name="Glavina del Rio T."/>
            <person name="Hammon N."/>
            <person name="Israni S."/>
            <person name="Dalin E."/>
            <person name="Tice H."/>
            <person name="Pitluck S."/>
            <person name="Di Bartolo G."/>
            <person name="Chain P."/>
            <person name="Malfatti S."/>
            <person name="Shin M."/>
            <person name="Vergez L."/>
            <person name="Schmutz J."/>
            <person name="Larimer F."/>
            <person name="Land M."/>
            <person name="Hauser L."/>
            <person name="Worsham P."/>
            <person name="Chu M."/>
            <person name="Bearden S."/>
            <person name="Garcia E."/>
            <person name="Richardson P."/>
        </authorList>
    </citation>
    <scope>NUCLEOTIDE SEQUENCE [LARGE SCALE GENOMIC DNA]</scope>
    <source>
        <strain>Pestoides F</strain>
    </source>
</reference>
<dbReference type="EC" id="2.5.1.3" evidence="1"/>
<dbReference type="EMBL" id="CP000668">
    <property type="protein sequence ID" value="ABP42087.1"/>
    <property type="status" value="ALT_INIT"/>
    <property type="molecule type" value="Genomic_DNA"/>
</dbReference>
<dbReference type="SMR" id="A4TS25"/>
<dbReference type="KEGG" id="ypp:YPDSF_3737"/>
<dbReference type="UniPathway" id="UPA00060">
    <property type="reaction ID" value="UER00141"/>
</dbReference>
<dbReference type="GO" id="GO:0005737">
    <property type="term" value="C:cytoplasm"/>
    <property type="evidence" value="ECO:0007669"/>
    <property type="project" value="TreeGrafter"/>
</dbReference>
<dbReference type="GO" id="GO:0000287">
    <property type="term" value="F:magnesium ion binding"/>
    <property type="evidence" value="ECO:0007669"/>
    <property type="project" value="UniProtKB-UniRule"/>
</dbReference>
<dbReference type="GO" id="GO:0004789">
    <property type="term" value="F:thiamine-phosphate diphosphorylase activity"/>
    <property type="evidence" value="ECO:0007669"/>
    <property type="project" value="UniProtKB-UniRule"/>
</dbReference>
<dbReference type="GO" id="GO:0009228">
    <property type="term" value="P:thiamine biosynthetic process"/>
    <property type="evidence" value="ECO:0007669"/>
    <property type="project" value="UniProtKB-KW"/>
</dbReference>
<dbReference type="GO" id="GO:0009229">
    <property type="term" value="P:thiamine diphosphate biosynthetic process"/>
    <property type="evidence" value="ECO:0007669"/>
    <property type="project" value="UniProtKB-UniRule"/>
</dbReference>
<dbReference type="CDD" id="cd00564">
    <property type="entry name" value="TMP_TenI"/>
    <property type="match status" value="1"/>
</dbReference>
<dbReference type="FunFam" id="3.20.20.70:FF:000064">
    <property type="entry name" value="Thiamine-phosphate synthase"/>
    <property type="match status" value="1"/>
</dbReference>
<dbReference type="Gene3D" id="3.20.20.70">
    <property type="entry name" value="Aldolase class I"/>
    <property type="match status" value="1"/>
</dbReference>
<dbReference type="HAMAP" id="MF_00097">
    <property type="entry name" value="TMP_synthase"/>
    <property type="match status" value="1"/>
</dbReference>
<dbReference type="InterPro" id="IPR013785">
    <property type="entry name" value="Aldolase_TIM"/>
</dbReference>
<dbReference type="InterPro" id="IPR036206">
    <property type="entry name" value="ThiamineP_synth_sf"/>
</dbReference>
<dbReference type="InterPro" id="IPR022998">
    <property type="entry name" value="ThiamineP_synth_TenI"/>
</dbReference>
<dbReference type="InterPro" id="IPR034291">
    <property type="entry name" value="TMP_synthase"/>
</dbReference>
<dbReference type="NCBIfam" id="NF002904">
    <property type="entry name" value="PRK03512.1"/>
    <property type="match status" value="1"/>
</dbReference>
<dbReference type="NCBIfam" id="TIGR00693">
    <property type="entry name" value="thiE"/>
    <property type="match status" value="1"/>
</dbReference>
<dbReference type="PANTHER" id="PTHR20857">
    <property type="entry name" value="THIAMINE-PHOSPHATE PYROPHOSPHORYLASE"/>
    <property type="match status" value="1"/>
</dbReference>
<dbReference type="PANTHER" id="PTHR20857:SF15">
    <property type="entry name" value="THIAMINE-PHOSPHATE SYNTHASE"/>
    <property type="match status" value="1"/>
</dbReference>
<dbReference type="Pfam" id="PF02581">
    <property type="entry name" value="TMP-TENI"/>
    <property type="match status" value="1"/>
</dbReference>
<dbReference type="SUPFAM" id="SSF51391">
    <property type="entry name" value="Thiamin phosphate synthase"/>
    <property type="match status" value="1"/>
</dbReference>
<keyword id="KW-0460">Magnesium</keyword>
<keyword id="KW-0479">Metal-binding</keyword>
<keyword id="KW-0784">Thiamine biosynthesis</keyword>
<keyword id="KW-0808">Transferase</keyword>
<organism>
    <name type="scientific">Yersinia pestis (strain Pestoides F)</name>
    <dbReference type="NCBI Taxonomy" id="386656"/>
    <lineage>
        <taxon>Bacteria</taxon>
        <taxon>Pseudomonadati</taxon>
        <taxon>Pseudomonadota</taxon>
        <taxon>Gammaproteobacteria</taxon>
        <taxon>Enterobacterales</taxon>
        <taxon>Yersiniaceae</taxon>
        <taxon>Yersinia</taxon>
    </lineage>
</organism>
<comment type="function">
    <text evidence="1">Condenses 4-methyl-5-(beta-hydroxyethyl)thiazole monophosphate (THZ-P) and 2-methyl-4-amino-5-hydroxymethyl pyrimidine pyrophosphate (HMP-PP) to form thiamine monophosphate (TMP).</text>
</comment>
<comment type="catalytic activity">
    <reaction evidence="1">
        <text>2-[(2R,5Z)-2-carboxy-4-methylthiazol-5(2H)-ylidene]ethyl phosphate + 4-amino-2-methyl-5-(diphosphooxymethyl)pyrimidine + 2 H(+) = thiamine phosphate + CO2 + diphosphate</text>
        <dbReference type="Rhea" id="RHEA:47844"/>
        <dbReference type="ChEBI" id="CHEBI:15378"/>
        <dbReference type="ChEBI" id="CHEBI:16526"/>
        <dbReference type="ChEBI" id="CHEBI:33019"/>
        <dbReference type="ChEBI" id="CHEBI:37575"/>
        <dbReference type="ChEBI" id="CHEBI:57841"/>
        <dbReference type="ChEBI" id="CHEBI:62899"/>
        <dbReference type="EC" id="2.5.1.3"/>
    </reaction>
</comment>
<comment type="catalytic activity">
    <reaction evidence="1">
        <text>2-(2-carboxy-4-methylthiazol-5-yl)ethyl phosphate + 4-amino-2-methyl-5-(diphosphooxymethyl)pyrimidine + 2 H(+) = thiamine phosphate + CO2 + diphosphate</text>
        <dbReference type="Rhea" id="RHEA:47848"/>
        <dbReference type="ChEBI" id="CHEBI:15378"/>
        <dbReference type="ChEBI" id="CHEBI:16526"/>
        <dbReference type="ChEBI" id="CHEBI:33019"/>
        <dbReference type="ChEBI" id="CHEBI:37575"/>
        <dbReference type="ChEBI" id="CHEBI:57841"/>
        <dbReference type="ChEBI" id="CHEBI:62890"/>
        <dbReference type="EC" id="2.5.1.3"/>
    </reaction>
</comment>
<comment type="catalytic activity">
    <reaction evidence="1">
        <text>4-methyl-5-(2-phosphooxyethyl)-thiazole + 4-amino-2-methyl-5-(diphosphooxymethyl)pyrimidine + H(+) = thiamine phosphate + diphosphate</text>
        <dbReference type="Rhea" id="RHEA:22328"/>
        <dbReference type="ChEBI" id="CHEBI:15378"/>
        <dbReference type="ChEBI" id="CHEBI:33019"/>
        <dbReference type="ChEBI" id="CHEBI:37575"/>
        <dbReference type="ChEBI" id="CHEBI:57841"/>
        <dbReference type="ChEBI" id="CHEBI:58296"/>
        <dbReference type="EC" id="2.5.1.3"/>
    </reaction>
</comment>
<comment type="cofactor">
    <cofactor evidence="1">
        <name>Mg(2+)</name>
        <dbReference type="ChEBI" id="CHEBI:18420"/>
    </cofactor>
    <text evidence="1">Binds 1 Mg(2+) ion per subunit.</text>
</comment>
<comment type="pathway">
    <text evidence="1">Cofactor biosynthesis; thiamine diphosphate biosynthesis; thiamine phosphate from 4-amino-2-methyl-5-diphosphomethylpyrimidine and 4-methyl-5-(2-phosphoethyl)-thiazole: step 1/1.</text>
</comment>
<comment type="similarity">
    <text evidence="1">Belongs to the thiamine-phosphate synthase family.</text>
</comment>
<comment type="sequence caution" evidence="2">
    <conflict type="erroneous initiation">
        <sequence resource="EMBL-CDS" id="ABP42087"/>
    </conflict>
</comment>
<protein>
    <recommendedName>
        <fullName evidence="1">Thiamine-phosphate synthase</fullName>
        <shortName evidence="1">TP synthase</shortName>
        <shortName evidence="1">TPS</shortName>
        <ecNumber evidence="1">2.5.1.3</ecNumber>
    </recommendedName>
    <alternativeName>
        <fullName evidence="1">Thiamine-phosphate pyrophosphorylase</fullName>
        <shortName evidence="1">TMP pyrophosphorylase</shortName>
        <shortName evidence="1">TMP-PPase</shortName>
    </alternativeName>
</protein>
<feature type="chain" id="PRO_0000336433" description="Thiamine-phosphate synthase">
    <location>
        <begin position="1"/>
        <end position="215"/>
    </location>
</feature>
<feature type="binding site" evidence="1">
    <location>
        <begin position="37"/>
        <end position="41"/>
    </location>
    <ligand>
        <name>4-amino-2-methyl-5-(diphosphooxymethyl)pyrimidine</name>
        <dbReference type="ChEBI" id="CHEBI:57841"/>
    </ligand>
</feature>
<feature type="binding site" evidence="1">
    <location>
        <position position="69"/>
    </location>
    <ligand>
        <name>4-amino-2-methyl-5-(diphosphooxymethyl)pyrimidine</name>
        <dbReference type="ChEBI" id="CHEBI:57841"/>
    </ligand>
</feature>
<feature type="binding site" evidence="1">
    <location>
        <position position="70"/>
    </location>
    <ligand>
        <name>Mg(2+)</name>
        <dbReference type="ChEBI" id="CHEBI:18420"/>
    </ligand>
</feature>
<feature type="binding site" evidence="1">
    <location>
        <position position="89"/>
    </location>
    <ligand>
        <name>Mg(2+)</name>
        <dbReference type="ChEBI" id="CHEBI:18420"/>
    </ligand>
</feature>
<feature type="binding site" evidence="1">
    <location>
        <position position="108"/>
    </location>
    <ligand>
        <name>4-amino-2-methyl-5-(diphosphooxymethyl)pyrimidine</name>
        <dbReference type="ChEBI" id="CHEBI:57841"/>
    </ligand>
</feature>
<feature type="binding site" evidence="1">
    <location>
        <begin position="134"/>
        <end position="136"/>
    </location>
    <ligand>
        <name>2-[(2R,5Z)-2-carboxy-4-methylthiazol-5(2H)-ylidene]ethyl phosphate</name>
        <dbReference type="ChEBI" id="CHEBI:62899"/>
    </ligand>
</feature>
<feature type="binding site" evidence="1">
    <location>
        <position position="137"/>
    </location>
    <ligand>
        <name>4-amino-2-methyl-5-(diphosphooxymethyl)pyrimidine</name>
        <dbReference type="ChEBI" id="CHEBI:57841"/>
    </ligand>
</feature>
<feature type="binding site" evidence="1">
    <location>
        <position position="166"/>
    </location>
    <ligand>
        <name>2-[(2R,5Z)-2-carboxy-4-methylthiazol-5(2H)-ylidene]ethyl phosphate</name>
        <dbReference type="ChEBI" id="CHEBI:62899"/>
    </ligand>
</feature>
<feature type="binding site" evidence="1">
    <location>
        <begin position="186"/>
        <end position="187"/>
    </location>
    <ligand>
        <name>2-[(2R,5Z)-2-carboxy-4-methylthiazol-5(2H)-ylidene]ethyl phosphate</name>
        <dbReference type="ChEBI" id="CHEBI:62899"/>
    </ligand>
</feature>
<evidence type="ECO:0000255" key="1">
    <source>
        <dbReference type="HAMAP-Rule" id="MF_00097"/>
    </source>
</evidence>
<evidence type="ECO:0000305" key="2"/>
<accession>A4TS25</accession>
<sequence>MATPGFPSTEQRLGLYPVVDSLLWIERLLAAGVTTLQLRIKNADDAQVEQDIVAAIELGKRYQARLFINDYWQLAVKHGAYGVHLGQEDLEAADLAAIQQAGLRLGISTHDEHELAVAKTLRPSYIALGHIFPTQTKQMPSSPQGLASLSRQVKNTPDYPTVAIGGISIERVPHVLATGVGSVAVVSAITLASDWQRATAQLLHLIEGKELADEK</sequence>
<name>THIE_YERPP</name>
<gene>
    <name evidence="1" type="primary">thiE</name>
    <name type="ordered locus">YPDSF_3737</name>
</gene>